<accession>Q8PBM1</accession>
<organism>
    <name type="scientific">Xanthomonas campestris pv. campestris (strain ATCC 33913 / DSM 3586 / NCPPB 528 / LMG 568 / P 25)</name>
    <dbReference type="NCBI Taxonomy" id="190485"/>
    <lineage>
        <taxon>Bacteria</taxon>
        <taxon>Pseudomonadati</taxon>
        <taxon>Pseudomonadota</taxon>
        <taxon>Gammaproteobacteria</taxon>
        <taxon>Lysobacterales</taxon>
        <taxon>Lysobacteraceae</taxon>
        <taxon>Xanthomonas</taxon>
    </lineage>
</organism>
<name>LEXA1_XANCP</name>
<evidence type="ECO:0000255" key="1">
    <source>
        <dbReference type="HAMAP-Rule" id="MF_00015"/>
    </source>
</evidence>
<feature type="chain" id="PRO_0000170109" description="LexA repressor 1">
    <location>
        <begin position="1"/>
        <end position="201"/>
    </location>
</feature>
<feature type="DNA-binding region" description="H-T-H motif" evidence="1">
    <location>
        <begin position="27"/>
        <end position="47"/>
    </location>
</feature>
<feature type="active site" description="For autocatalytic cleavage activity" evidence="1">
    <location>
        <position position="122"/>
    </location>
</feature>
<feature type="active site" description="For autocatalytic cleavage activity" evidence="1">
    <location>
        <position position="159"/>
    </location>
</feature>
<feature type="site" description="Cleavage; by autolysis" evidence="1">
    <location>
        <begin position="87"/>
        <end position="88"/>
    </location>
</feature>
<protein>
    <recommendedName>
        <fullName evidence="1">LexA repressor 1</fullName>
        <ecNumber evidence="1">3.4.21.88</ecNumber>
    </recommendedName>
</protein>
<sequence>MDSLSPKRAAVLAFLQQQAQAGLAPSLAEIAQAFGFASRNAAQKHVQALAEAGLIELVPNRKRGIRVPGGAGPDALLALPVLGRVAAGVPIGADIGLDRQLWLDRSLFALRPDYLLQVQGDSMIDDGILEGDLVGVQRSSDARNGQIVVARVDGEITIKRLERSADAIRLLPRNPAHAPIVVAADADFAIEGVYCGLIRQG</sequence>
<gene>
    <name evidence="1" type="primary">lexA1</name>
    <name type="ordered locus">XCC1098</name>
</gene>
<proteinExistence type="inferred from homology"/>
<dbReference type="EC" id="3.4.21.88" evidence="1"/>
<dbReference type="EMBL" id="AE008922">
    <property type="protein sequence ID" value="AAM40397.1"/>
    <property type="molecule type" value="Genomic_DNA"/>
</dbReference>
<dbReference type="RefSeq" id="NP_636473.1">
    <property type="nucleotide sequence ID" value="NC_003902.1"/>
</dbReference>
<dbReference type="SMR" id="Q8PBM1"/>
<dbReference type="STRING" id="190485.XCC1098"/>
<dbReference type="EnsemblBacteria" id="AAM40397">
    <property type="protein sequence ID" value="AAM40397"/>
    <property type="gene ID" value="XCC1098"/>
</dbReference>
<dbReference type="KEGG" id="xcc:XCC1098"/>
<dbReference type="PATRIC" id="fig|190485.4.peg.1171"/>
<dbReference type="eggNOG" id="COG1974">
    <property type="taxonomic scope" value="Bacteria"/>
</dbReference>
<dbReference type="HOGENOM" id="CLU_066192_45_3_6"/>
<dbReference type="OrthoDB" id="9802364at2"/>
<dbReference type="Proteomes" id="UP000001010">
    <property type="component" value="Chromosome"/>
</dbReference>
<dbReference type="CollecTF" id="EXPREG_00001390"/>
<dbReference type="GO" id="GO:0032993">
    <property type="term" value="C:protein-DNA complex"/>
    <property type="evidence" value="ECO:0000318"/>
    <property type="project" value="GO_Central"/>
</dbReference>
<dbReference type="GO" id="GO:0001217">
    <property type="term" value="F:DNA-binding transcription repressor activity"/>
    <property type="evidence" value="ECO:0000318"/>
    <property type="project" value="GO_Central"/>
</dbReference>
<dbReference type="GO" id="GO:0043565">
    <property type="term" value="F:sequence-specific DNA binding"/>
    <property type="evidence" value="ECO:0000318"/>
    <property type="project" value="GO_Central"/>
</dbReference>
<dbReference type="GO" id="GO:0004252">
    <property type="term" value="F:serine-type endopeptidase activity"/>
    <property type="evidence" value="ECO:0007669"/>
    <property type="project" value="UniProtKB-UniRule"/>
</dbReference>
<dbReference type="GO" id="GO:0006281">
    <property type="term" value="P:DNA repair"/>
    <property type="evidence" value="ECO:0007669"/>
    <property type="project" value="UniProtKB-UniRule"/>
</dbReference>
<dbReference type="GO" id="GO:0006260">
    <property type="term" value="P:DNA replication"/>
    <property type="evidence" value="ECO:0007669"/>
    <property type="project" value="UniProtKB-UniRule"/>
</dbReference>
<dbReference type="GO" id="GO:0045892">
    <property type="term" value="P:negative regulation of DNA-templated transcription"/>
    <property type="evidence" value="ECO:0000318"/>
    <property type="project" value="GO_Central"/>
</dbReference>
<dbReference type="GO" id="GO:0006508">
    <property type="term" value="P:proteolysis"/>
    <property type="evidence" value="ECO:0007669"/>
    <property type="project" value="InterPro"/>
</dbReference>
<dbReference type="GO" id="GO:0009432">
    <property type="term" value="P:SOS response"/>
    <property type="evidence" value="ECO:0000318"/>
    <property type="project" value="GO_Central"/>
</dbReference>
<dbReference type="CDD" id="cd06529">
    <property type="entry name" value="S24_LexA-like"/>
    <property type="match status" value="1"/>
</dbReference>
<dbReference type="FunFam" id="1.10.10.10:FF:000009">
    <property type="entry name" value="LexA repressor"/>
    <property type="match status" value="1"/>
</dbReference>
<dbReference type="FunFam" id="2.10.109.10:FF:000001">
    <property type="entry name" value="LexA repressor"/>
    <property type="match status" value="1"/>
</dbReference>
<dbReference type="Gene3D" id="2.10.109.10">
    <property type="entry name" value="Umud Fragment, subunit A"/>
    <property type="match status" value="1"/>
</dbReference>
<dbReference type="Gene3D" id="1.10.10.10">
    <property type="entry name" value="Winged helix-like DNA-binding domain superfamily/Winged helix DNA-binding domain"/>
    <property type="match status" value="1"/>
</dbReference>
<dbReference type="HAMAP" id="MF_00015">
    <property type="entry name" value="LexA"/>
    <property type="match status" value="1"/>
</dbReference>
<dbReference type="InterPro" id="IPR006200">
    <property type="entry name" value="LexA"/>
</dbReference>
<dbReference type="InterPro" id="IPR039418">
    <property type="entry name" value="LexA-like"/>
</dbReference>
<dbReference type="InterPro" id="IPR036286">
    <property type="entry name" value="LexA/Signal_pep-like_sf"/>
</dbReference>
<dbReference type="InterPro" id="IPR006199">
    <property type="entry name" value="LexA_DNA-bd_dom"/>
</dbReference>
<dbReference type="InterPro" id="IPR050077">
    <property type="entry name" value="LexA_repressor"/>
</dbReference>
<dbReference type="InterPro" id="IPR006197">
    <property type="entry name" value="Peptidase_S24_LexA"/>
</dbReference>
<dbReference type="InterPro" id="IPR015927">
    <property type="entry name" value="Peptidase_S24_S26A/B/C"/>
</dbReference>
<dbReference type="InterPro" id="IPR036388">
    <property type="entry name" value="WH-like_DNA-bd_sf"/>
</dbReference>
<dbReference type="InterPro" id="IPR036390">
    <property type="entry name" value="WH_DNA-bd_sf"/>
</dbReference>
<dbReference type="NCBIfam" id="TIGR00498">
    <property type="entry name" value="lexA"/>
    <property type="match status" value="1"/>
</dbReference>
<dbReference type="PANTHER" id="PTHR33516">
    <property type="entry name" value="LEXA REPRESSOR"/>
    <property type="match status" value="1"/>
</dbReference>
<dbReference type="PANTHER" id="PTHR33516:SF2">
    <property type="entry name" value="LEXA REPRESSOR-RELATED"/>
    <property type="match status" value="1"/>
</dbReference>
<dbReference type="Pfam" id="PF01726">
    <property type="entry name" value="LexA_DNA_bind"/>
    <property type="match status" value="1"/>
</dbReference>
<dbReference type="Pfam" id="PF00717">
    <property type="entry name" value="Peptidase_S24"/>
    <property type="match status" value="1"/>
</dbReference>
<dbReference type="PRINTS" id="PR00726">
    <property type="entry name" value="LEXASERPTASE"/>
</dbReference>
<dbReference type="SUPFAM" id="SSF51306">
    <property type="entry name" value="LexA/Signal peptidase"/>
    <property type="match status" value="1"/>
</dbReference>
<dbReference type="SUPFAM" id="SSF46785">
    <property type="entry name" value="Winged helix' DNA-binding domain"/>
    <property type="match status" value="1"/>
</dbReference>
<keyword id="KW-0068">Autocatalytic cleavage</keyword>
<keyword id="KW-0227">DNA damage</keyword>
<keyword id="KW-0234">DNA repair</keyword>
<keyword id="KW-0235">DNA replication</keyword>
<keyword id="KW-0238">DNA-binding</keyword>
<keyword id="KW-0378">Hydrolase</keyword>
<keyword id="KW-1185">Reference proteome</keyword>
<keyword id="KW-0678">Repressor</keyword>
<keyword id="KW-0742">SOS response</keyword>
<keyword id="KW-0804">Transcription</keyword>
<keyword id="KW-0805">Transcription regulation</keyword>
<comment type="function">
    <text evidence="1">Represses a number of genes involved in the response to DNA damage (SOS response), including recA and lexA. In the presence of single-stranded DNA, RecA interacts with LexA causing an autocatalytic cleavage which disrupts the DNA-binding part of LexA, leading to derepression of the SOS regulon and eventually DNA repair.</text>
</comment>
<comment type="catalytic activity">
    <reaction evidence="1">
        <text>Hydrolysis of Ala-|-Gly bond in repressor LexA.</text>
        <dbReference type="EC" id="3.4.21.88"/>
    </reaction>
</comment>
<comment type="subunit">
    <text evidence="1">Homodimer.</text>
</comment>
<comment type="similarity">
    <text evidence="1">Belongs to the peptidase S24 family.</text>
</comment>
<reference key="1">
    <citation type="journal article" date="2002" name="Nature">
        <title>Comparison of the genomes of two Xanthomonas pathogens with differing host specificities.</title>
        <authorList>
            <person name="da Silva A.C.R."/>
            <person name="Ferro J.A."/>
            <person name="Reinach F.C."/>
            <person name="Farah C.S."/>
            <person name="Furlan L.R."/>
            <person name="Quaggio R.B."/>
            <person name="Monteiro-Vitorello C.B."/>
            <person name="Van Sluys M.A."/>
            <person name="Almeida N.F. Jr."/>
            <person name="Alves L.M.C."/>
            <person name="do Amaral A.M."/>
            <person name="Bertolini M.C."/>
            <person name="Camargo L.E.A."/>
            <person name="Camarotte G."/>
            <person name="Cannavan F."/>
            <person name="Cardozo J."/>
            <person name="Chambergo F."/>
            <person name="Ciapina L.P."/>
            <person name="Cicarelli R.M.B."/>
            <person name="Coutinho L.L."/>
            <person name="Cursino-Santos J.R."/>
            <person name="El-Dorry H."/>
            <person name="Faria J.B."/>
            <person name="Ferreira A.J.S."/>
            <person name="Ferreira R.C.C."/>
            <person name="Ferro M.I.T."/>
            <person name="Formighieri E.F."/>
            <person name="Franco M.C."/>
            <person name="Greggio C.C."/>
            <person name="Gruber A."/>
            <person name="Katsuyama A.M."/>
            <person name="Kishi L.T."/>
            <person name="Leite R.P."/>
            <person name="Lemos E.G.M."/>
            <person name="Lemos M.V.F."/>
            <person name="Locali E.C."/>
            <person name="Machado M.A."/>
            <person name="Madeira A.M.B.N."/>
            <person name="Martinez-Rossi N.M."/>
            <person name="Martins E.C."/>
            <person name="Meidanis J."/>
            <person name="Menck C.F.M."/>
            <person name="Miyaki C.Y."/>
            <person name="Moon D.H."/>
            <person name="Moreira L.M."/>
            <person name="Novo M.T.M."/>
            <person name="Okura V.K."/>
            <person name="Oliveira M.C."/>
            <person name="Oliveira V.R."/>
            <person name="Pereira H.A."/>
            <person name="Rossi A."/>
            <person name="Sena J.A.D."/>
            <person name="Silva C."/>
            <person name="de Souza R.F."/>
            <person name="Spinola L.A.F."/>
            <person name="Takita M.A."/>
            <person name="Tamura R.E."/>
            <person name="Teixeira E.C."/>
            <person name="Tezza R.I.D."/>
            <person name="Trindade dos Santos M."/>
            <person name="Truffi D."/>
            <person name="Tsai S.M."/>
            <person name="White F.F."/>
            <person name="Setubal J.C."/>
            <person name="Kitajima J.P."/>
        </authorList>
    </citation>
    <scope>NUCLEOTIDE SEQUENCE [LARGE SCALE GENOMIC DNA]</scope>
    <source>
        <strain>ATCC 33913 / DSM 3586 / NCPPB 528 / LMG 568 / P 25</strain>
    </source>
</reference>